<organism>
    <name type="scientific">Dictyostelium discoideum</name>
    <name type="common">Social amoeba</name>
    <dbReference type="NCBI Taxonomy" id="44689"/>
    <lineage>
        <taxon>Eukaryota</taxon>
        <taxon>Amoebozoa</taxon>
        <taxon>Evosea</taxon>
        <taxon>Eumycetozoa</taxon>
        <taxon>Dictyostelia</taxon>
        <taxon>Dictyosteliales</taxon>
        <taxon>Dictyosteliaceae</taxon>
        <taxon>Dictyostelium</taxon>
    </lineage>
</organism>
<evidence type="ECO:0000256" key="1">
    <source>
        <dbReference type="SAM" id="MobiDB-lite"/>
    </source>
</evidence>
<evidence type="ECO:0000305" key="2"/>
<keyword id="KW-1185">Reference proteome</keyword>
<protein>
    <recommendedName>
        <fullName>BolA-like protein DDB_G0274169</fullName>
    </recommendedName>
</protein>
<dbReference type="EMBL" id="AAFI02000012">
    <property type="protein sequence ID" value="EAL69977.1"/>
    <property type="molecule type" value="Genomic_DNA"/>
</dbReference>
<dbReference type="RefSeq" id="XP_644296.1">
    <property type="nucleotide sequence ID" value="XM_639204.1"/>
</dbReference>
<dbReference type="SMR" id="Q86KD0"/>
<dbReference type="FunCoup" id="Q86KD0">
    <property type="interactions" value="20"/>
</dbReference>
<dbReference type="STRING" id="44689.Q86KD0"/>
<dbReference type="PaxDb" id="44689-DDB0266826"/>
<dbReference type="EnsemblProtists" id="EAL69977">
    <property type="protein sequence ID" value="EAL69977"/>
    <property type="gene ID" value="DDB_G0274169"/>
</dbReference>
<dbReference type="GeneID" id="8619724"/>
<dbReference type="KEGG" id="ddi:DDB_G0274169"/>
<dbReference type="dictyBase" id="DDB_G0274169"/>
<dbReference type="VEuPathDB" id="AmoebaDB:DDB_G0274169"/>
<dbReference type="eggNOG" id="KOG2313">
    <property type="taxonomic scope" value="Eukaryota"/>
</dbReference>
<dbReference type="HOGENOM" id="CLU_109462_3_0_1"/>
<dbReference type="InParanoid" id="Q86KD0"/>
<dbReference type="OMA" id="QTHFKAV"/>
<dbReference type="PhylomeDB" id="Q86KD0"/>
<dbReference type="PRO" id="PR:Q86KD0"/>
<dbReference type="Proteomes" id="UP000002195">
    <property type="component" value="Chromosome 2"/>
</dbReference>
<dbReference type="GO" id="GO:0005739">
    <property type="term" value="C:mitochondrion"/>
    <property type="evidence" value="ECO:0000318"/>
    <property type="project" value="GO_Central"/>
</dbReference>
<dbReference type="FunFam" id="3.30.300.90:FF:000001">
    <property type="entry name" value="Transcriptional regulator BolA"/>
    <property type="match status" value="1"/>
</dbReference>
<dbReference type="Gene3D" id="3.30.300.90">
    <property type="entry name" value="BolA-like"/>
    <property type="match status" value="1"/>
</dbReference>
<dbReference type="InterPro" id="IPR002634">
    <property type="entry name" value="BolA"/>
</dbReference>
<dbReference type="InterPro" id="IPR036065">
    <property type="entry name" value="BolA-like_sf"/>
</dbReference>
<dbReference type="InterPro" id="IPR050961">
    <property type="entry name" value="BolA/IbaG_stress_morph_reg"/>
</dbReference>
<dbReference type="PANTHER" id="PTHR46229">
    <property type="entry name" value="BOLA TRANSCRIPTION REGULATOR"/>
    <property type="match status" value="1"/>
</dbReference>
<dbReference type="PANTHER" id="PTHR46229:SF3">
    <property type="entry name" value="BOLA-LIKE PROTEIN DDB_G0274169"/>
    <property type="match status" value="1"/>
</dbReference>
<dbReference type="Pfam" id="PF01722">
    <property type="entry name" value="BolA"/>
    <property type="match status" value="1"/>
</dbReference>
<dbReference type="PIRSF" id="PIRSF003113">
    <property type="entry name" value="BolA"/>
    <property type="match status" value="1"/>
</dbReference>
<dbReference type="SUPFAM" id="SSF82657">
    <property type="entry name" value="BolA-like"/>
    <property type="match status" value="1"/>
</dbReference>
<proteinExistence type="inferred from homology"/>
<name>Y7416_DICDI</name>
<reference key="1">
    <citation type="journal article" date="2002" name="Nature">
        <title>Sequence and analysis of chromosome 2 of Dictyostelium discoideum.</title>
        <authorList>
            <person name="Gloeckner G."/>
            <person name="Eichinger L."/>
            <person name="Szafranski K."/>
            <person name="Pachebat J.A."/>
            <person name="Bankier A.T."/>
            <person name="Dear P.H."/>
            <person name="Lehmann R."/>
            <person name="Baumgart C."/>
            <person name="Parra G."/>
            <person name="Abril J.F."/>
            <person name="Guigo R."/>
            <person name="Kumpf K."/>
            <person name="Tunggal B."/>
            <person name="Cox E.C."/>
            <person name="Quail M.A."/>
            <person name="Platzer M."/>
            <person name="Rosenthal A."/>
            <person name="Noegel A.A."/>
        </authorList>
    </citation>
    <scope>NUCLEOTIDE SEQUENCE [LARGE SCALE GENOMIC DNA]</scope>
    <source>
        <strain>AX4</strain>
    </source>
</reference>
<reference key="2">
    <citation type="journal article" date="2005" name="Nature">
        <title>The genome of the social amoeba Dictyostelium discoideum.</title>
        <authorList>
            <person name="Eichinger L."/>
            <person name="Pachebat J.A."/>
            <person name="Gloeckner G."/>
            <person name="Rajandream M.A."/>
            <person name="Sucgang R."/>
            <person name="Berriman M."/>
            <person name="Song J."/>
            <person name="Olsen R."/>
            <person name="Szafranski K."/>
            <person name="Xu Q."/>
            <person name="Tunggal B."/>
            <person name="Kummerfeld S."/>
            <person name="Madera M."/>
            <person name="Konfortov B.A."/>
            <person name="Rivero F."/>
            <person name="Bankier A.T."/>
            <person name="Lehmann R."/>
            <person name="Hamlin N."/>
            <person name="Davies R."/>
            <person name="Gaudet P."/>
            <person name="Fey P."/>
            <person name="Pilcher K."/>
            <person name="Chen G."/>
            <person name="Saunders D."/>
            <person name="Sodergren E.J."/>
            <person name="Davis P."/>
            <person name="Kerhornou A."/>
            <person name="Nie X."/>
            <person name="Hall N."/>
            <person name="Anjard C."/>
            <person name="Hemphill L."/>
            <person name="Bason N."/>
            <person name="Farbrother P."/>
            <person name="Desany B."/>
            <person name="Just E."/>
            <person name="Morio T."/>
            <person name="Rost R."/>
            <person name="Churcher C.M."/>
            <person name="Cooper J."/>
            <person name="Haydock S."/>
            <person name="van Driessche N."/>
            <person name="Cronin A."/>
            <person name="Goodhead I."/>
            <person name="Muzny D.M."/>
            <person name="Mourier T."/>
            <person name="Pain A."/>
            <person name="Lu M."/>
            <person name="Harper D."/>
            <person name="Lindsay R."/>
            <person name="Hauser H."/>
            <person name="James K.D."/>
            <person name="Quiles M."/>
            <person name="Madan Babu M."/>
            <person name="Saito T."/>
            <person name="Buchrieser C."/>
            <person name="Wardroper A."/>
            <person name="Felder M."/>
            <person name="Thangavelu M."/>
            <person name="Johnson D."/>
            <person name="Knights A."/>
            <person name="Loulseged H."/>
            <person name="Mungall K.L."/>
            <person name="Oliver K."/>
            <person name="Price C."/>
            <person name="Quail M.A."/>
            <person name="Urushihara H."/>
            <person name="Hernandez J."/>
            <person name="Rabbinowitsch E."/>
            <person name="Steffen D."/>
            <person name="Sanders M."/>
            <person name="Ma J."/>
            <person name="Kohara Y."/>
            <person name="Sharp S."/>
            <person name="Simmonds M.N."/>
            <person name="Spiegler S."/>
            <person name="Tivey A."/>
            <person name="Sugano S."/>
            <person name="White B."/>
            <person name="Walker D."/>
            <person name="Woodward J.R."/>
            <person name="Winckler T."/>
            <person name="Tanaka Y."/>
            <person name="Shaulsky G."/>
            <person name="Schleicher M."/>
            <person name="Weinstock G.M."/>
            <person name="Rosenthal A."/>
            <person name="Cox E.C."/>
            <person name="Chisholm R.L."/>
            <person name="Gibbs R.A."/>
            <person name="Loomis W.F."/>
            <person name="Platzer M."/>
            <person name="Kay R.R."/>
            <person name="Williams J.G."/>
            <person name="Dear P.H."/>
            <person name="Noegel A.A."/>
            <person name="Barrell B.G."/>
            <person name="Kuspa A."/>
        </authorList>
    </citation>
    <scope>NUCLEOTIDE SEQUENCE [LARGE SCALE GENOMIC DNA]</scope>
    <source>
        <strain>AX4</strain>
    </source>
</reference>
<comment type="similarity">
    <text evidence="2">Belongs to the BolA/IbaG family.</text>
</comment>
<accession>Q86KD0</accession>
<accession>Q554M7</accession>
<sequence length="114" mass="12934">MTTIGPIENEIKELLTKELNPINLEIINESYMHNVPKGSESHFKVKIVSEKFETLSMIEQHRLVNEILKNFIGNGKIHALSITSRTPTQWKKNNQTKINVDDDKSPSCKGGFGK</sequence>
<feature type="chain" id="PRO_0000363149" description="BolA-like protein DDB_G0274169">
    <location>
        <begin position="1"/>
        <end position="114"/>
    </location>
</feature>
<feature type="region of interest" description="Disordered" evidence="1">
    <location>
        <begin position="88"/>
        <end position="114"/>
    </location>
</feature>
<feature type="compositionally biased region" description="Polar residues" evidence="1">
    <location>
        <begin position="88"/>
        <end position="98"/>
    </location>
</feature>
<gene>
    <name type="ORF">DDB_G0274169</name>
</gene>